<gene>
    <name type="primary">RAB7A</name>
    <name type="synonym">RAB7</name>
</gene>
<protein>
    <recommendedName>
        <fullName>Ras-related protein Rab-7a</fullName>
        <ecNumber evidence="3">3.6.5.2</ecNumber>
    </recommendedName>
</protein>
<dbReference type="EC" id="3.6.5.2" evidence="3"/>
<dbReference type="EMBL" id="CR859246">
    <property type="protein sequence ID" value="CAH91426.1"/>
    <property type="molecule type" value="mRNA"/>
</dbReference>
<dbReference type="RefSeq" id="NP_001127416.1">
    <property type="nucleotide sequence ID" value="NM_001133944.1"/>
</dbReference>
<dbReference type="SMR" id="Q5R9Y4"/>
<dbReference type="FunCoup" id="Q5R9Y4">
    <property type="interactions" value="3171"/>
</dbReference>
<dbReference type="STRING" id="9601.ENSPPYP00000015022"/>
<dbReference type="GeneID" id="100174486"/>
<dbReference type="KEGG" id="pon:100174486"/>
<dbReference type="CTD" id="7879"/>
<dbReference type="eggNOG" id="KOG0394">
    <property type="taxonomic scope" value="Eukaryota"/>
</dbReference>
<dbReference type="InParanoid" id="Q5R9Y4"/>
<dbReference type="OrthoDB" id="1436450at2759"/>
<dbReference type="Proteomes" id="UP000001595">
    <property type="component" value="Unplaced"/>
</dbReference>
<dbReference type="GO" id="GO:0000421">
    <property type="term" value="C:autophagosome membrane"/>
    <property type="evidence" value="ECO:0007669"/>
    <property type="project" value="UniProtKB-SubCell"/>
</dbReference>
<dbReference type="GO" id="GO:0005829">
    <property type="term" value="C:cytosol"/>
    <property type="evidence" value="ECO:0000250"/>
    <property type="project" value="GO_Central"/>
</dbReference>
<dbReference type="GO" id="GO:0005770">
    <property type="term" value="C:late endosome"/>
    <property type="evidence" value="ECO:0000250"/>
    <property type="project" value="UniProtKB"/>
</dbReference>
<dbReference type="GO" id="GO:0031902">
    <property type="term" value="C:late endosome membrane"/>
    <property type="evidence" value="ECO:0000250"/>
    <property type="project" value="GO_Central"/>
</dbReference>
<dbReference type="GO" id="GO:0005811">
    <property type="term" value="C:lipid droplet"/>
    <property type="evidence" value="ECO:0000250"/>
    <property type="project" value="GO_Central"/>
</dbReference>
<dbReference type="GO" id="GO:0005765">
    <property type="term" value="C:lysosomal membrane"/>
    <property type="evidence" value="ECO:0007669"/>
    <property type="project" value="UniProtKB-SubCell"/>
</dbReference>
<dbReference type="GO" id="GO:0033162">
    <property type="term" value="C:melanosome membrane"/>
    <property type="evidence" value="ECO:0007669"/>
    <property type="project" value="UniProtKB-SubCell"/>
</dbReference>
<dbReference type="GO" id="GO:0031966">
    <property type="term" value="C:mitochondrial membrane"/>
    <property type="evidence" value="ECO:0007669"/>
    <property type="project" value="UniProtKB-SubCell"/>
</dbReference>
<dbReference type="GO" id="GO:0005739">
    <property type="term" value="C:mitochondrion"/>
    <property type="evidence" value="ECO:0000250"/>
    <property type="project" value="UniProtKB"/>
</dbReference>
<dbReference type="GO" id="GO:0045335">
    <property type="term" value="C:phagocytic vesicle"/>
    <property type="evidence" value="ECO:0000250"/>
    <property type="project" value="UniProtKB"/>
</dbReference>
<dbReference type="GO" id="GO:0030670">
    <property type="term" value="C:phagocytic vesicle membrane"/>
    <property type="evidence" value="ECO:0007669"/>
    <property type="project" value="UniProtKB-SubCell"/>
</dbReference>
<dbReference type="GO" id="GO:0003925">
    <property type="term" value="F:G protein activity"/>
    <property type="evidence" value="ECO:0007669"/>
    <property type="project" value="UniProtKB-EC"/>
</dbReference>
<dbReference type="GO" id="GO:0005525">
    <property type="term" value="F:GTP binding"/>
    <property type="evidence" value="ECO:0007669"/>
    <property type="project" value="UniProtKB-KW"/>
</dbReference>
<dbReference type="GO" id="GO:0045022">
    <property type="term" value="P:early endosome to late endosome transport"/>
    <property type="evidence" value="ECO:0000250"/>
    <property type="project" value="UniProtKB"/>
</dbReference>
<dbReference type="GO" id="GO:0008333">
    <property type="term" value="P:endosome to lysosome transport"/>
    <property type="evidence" value="ECO:0007669"/>
    <property type="project" value="TreeGrafter"/>
</dbReference>
<dbReference type="GO" id="GO:0099638">
    <property type="term" value="P:endosome to plasma membrane protein transport"/>
    <property type="evidence" value="ECO:0000250"/>
    <property type="project" value="UniProtKB"/>
</dbReference>
<dbReference type="GO" id="GO:0016042">
    <property type="term" value="P:lipid catabolic process"/>
    <property type="evidence" value="ECO:0007669"/>
    <property type="project" value="UniProtKB-KW"/>
</dbReference>
<dbReference type="GO" id="GO:0061724">
    <property type="term" value="P:lipophagy"/>
    <property type="evidence" value="ECO:0000250"/>
    <property type="project" value="GO_Central"/>
</dbReference>
<dbReference type="GO" id="GO:0090383">
    <property type="term" value="P:phagosome acidification"/>
    <property type="evidence" value="ECO:0000250"/>
    <property type="project" value="UniProtKB"/>
</dbReference>
<dbReference type="GO" id="GO:0090385">
    <property type="term" value="P:phagosome-lysosome fusion"/>
    <property type="evidence" value="ECO:0000250"/>
    <property type="project" value="UniProtKB"/>
</dbReference>
<dbReference type="CDD" id="cd01862">
    <property type="entry name" value="Rab7"/>
    <property type="match status" value="1"/>
</dbReference>
<dbReference type="FunFam" id="3.40.50.300:FF:000086">
    <property type="entry name" value="Ras-related small GTPase"/>
    <property type="match status" value="1"/>
</dbReference>
<dbReference type="Gene3D" id="3.40.50.300">
    <property type="entry name" value="P-loop containing nucleotide triphosphate hydrolases"/>
    <property type="match status" value="1"/>
</dbReference>
<dbReference type="InterPro" id="IPR027417">
    <property type="entry name" value="P-loop_NTPase"/>
</dbReference>
<dbReference type="InterPro" id="IPR005225">
    <property type="entry name" value="Small_GTP-bd"/>
</dbReference>
<dbReference type="InterPro" id="IPR001806">
    <property type="entry name" value="Small_GTPase"/>
</dbReference>
<dbReference type="NCBIfam" id="TIGR00231">
    <property type="entry name" value="small_GTP"/>
    <property type="match status" value="1"/>
</dbReference>
<dbReference type="PANTHER" id="PTHR47981">
    <property type="entry name" value="RAB FAMILY"/>
    <property type="match status" value="1"/>
</dbReference>
<dbReference type="PANTHER" id="PTHR47981:SF13">
    <property type="entry name" value="RAS-RELATED PROTEIN RAB-7A"/>
    <property type="match status" value="1"/>
</dbReference>
<dbReference type="Pfam" id="PF00071">
    <property type="entry name" value="Ras"/>
    <property type="match status" value="1"/>
</dbReference>
<dbReference type="PRINTS" id="PR00449">
    <property type="entry name" value="RASTRNSFRMNG"/>
</dbReference>
<dbReference type="SMART" id="SM00175">
    <property type="entry name" value="RAB"/>
    <property type="match status" value="1"/>
</dbReference>
<dbReference type="SMART" id="SM00176">
    <property type="entry name" value="RAN"/>
    <property type="match status" value="1"/>
</dbReference>
<dbReference type="SMART" id="SM00173">
    <property type="entry name" value="RAS"/>
    <property type="match status" value="1"/>
</dbReference>
<dbReference type="SMART" id="SM00174">
    <property type="entry name" value="RHO"/>
    <property type="match status" value="1"/>
</dbReference>
<dbReference type="SUPFAM" id="SSF52540">
    <property type="entry name" value="P-loop containing nucleoside triphosphate hydrolases"/>
    <property type="match status" value="1"/>
</dbReference>
<dbReference type="PROSITE" id="PS51419">
    <property type="entry name" value="RAB"/>
    <property type="match status" value="1"/>
</dbReference>
<name>RAB7A_PONAB</name>
<reference key="1">
    <citation type="submission" date="2004-11" db="EMBL/GenBank/DDBJ databases">
        <authorList>
            <consortium name="The German cDNA consortium"/>
        </authorList>
    </citation>
    <scope>NUCLEOTIDE SEQUENCE [LARGE SCALE MRNA]</scope>
    <source>
        <tissue>Brain cortex</tissue>
    </source>
</reference>
<evidence type="ECO:0000250" key="1"/>
<evidence type="ECO:0000250" key="2">
    <source>
        <dbReference type="UniProtKB" id="P09527"/>
    </source>
</evidence>
<evidence type="ECO:0000250" key="3">
    <source>
        <dbReference type="UniProtKB" id="P51149"/>
    </source>
</evidence>
<evidence type="ECO:0000250" key="4">
    <source>
        <dbReference type="UniProtKB" id="P51150"/>
    </source>
</evidence>
<evidence type="ECO:0000305" key="5"/>
<organism>
    <name type="scientific">Pongo abelii</name>
    <name type="common">Sumatran orangutan</name>
    <name type="synonym">Pongo pygmaeus abelii</name>
    <dbReference type="NCBI Taxonomy" id="9601"/>
    <lineage>
        <taxon>Eukaryota</taxon>
        <taxon>Metazoa</taxon>
        <taxon>Chordata</taxon>
        <taxon>Craniata</taxon>
        <taxon>Vertebrata</taxon>
        <taxon>Euteleostomi</taxon>
        <taxon>Mammalia</taxon>
        <taxon>Eutheria</taxon>
        <taxon>Euarchontoglires</taxon>
        <taxon>Primates</taxon>
        <taxon>Haplorrhini</taxon>
        <taxon>Catarrhini</taxon>
        <taxon>Hominidae</taxon>
        <taxon>Pongo</taxon>
    </lineage>
</organism>
<comment type="function">
    <text evidence="3 4">The small GTPases Rab are key regulators of intracellular membrane trafficking, from the formation of transport vesicles to their fusion with membranes. Rabs cycle between an inactive GDP-bound form and an active GTP-bound form that is able to recruit to membranes different sets of downstream effectors directly responsible for vesicle formation, movement, tethering and fusion. In its active state, RAB7A binds to a variety of effector proteins playing a key role in the regulation of endo-lysosomal trafficking. Governs early-to-late endosomal maturation, microtubule minus-end as well as plus-end directed endosomal migration and positioning, and endosome-lysosome transport through different protein-protein interaction cascades (By similarity). Also plays a central role in growth-factor-mediated cell signaling, nutrient-transporter-mediated nutrient uptake, neurotrophin transport in the axons of neurons and lipid metabolism (By similarity). Also involved in regulation of some specialized endosomal membrane trafficking, such as maturation of melanosomes, pathogen-induced phagosomes (or vacuoles) and autophagosomes (By similarity). Plays a role in the maturation and acidification of phagosomes that engulf pathogens, such as S.aureus and Mycobacteria (By similarity). Plays a role in the fusion of phagosomes with lysosomes (By similarity). In concert with RAC1, plays a role in regulating the formation of RBs (ruffled borders) in osteoclasts (By similarity). Controls the endosomal trafficking and neurite outgrowth signaling of NTRK1/TRKA (By similarity). Regulates the endocytic trafficking of the EGF-EGFR complex by regulating its lysosomal degradation (By similarity). Involved in the ADRB2-stimulated lipolysis through lipophagy, a cytosolic lipase-independent autophagic pathway. Required for the exosomal release of SDCBP, CD63 and syndecan (By similarity). Required for vesicular trafficking and cell surface expression of ACE2 (By similarity). May play a role in PRPH neuronal intermediate filament assembly (By similarity).</text>
</comment>
<comment type="catalytic activity">
    <reaction evidence="3">
        <text>GTP + H2O = GDP + phosphate + H(+)</text>
        <dbReference type="Rhea" id="RHEA:19669"/>
        <dbReference type="ChEBI" id="CHEBI:15377"/>
        <dbReference type="ChEBI" id="CHEBI:15378"/>
        <dbReference type="ChEBI" id="CHEBI:37565"/>
        <dbReference type="ChEBI" id="CHEBI:43474"/>
        <dbReference type="ChEBI" id="CHEBI:58189"/>
        <dbReference type="EC" id="3.6.5.2"/>
    </reaction>
    <physiologicalReaction direction="left-to-right" evidence="3">
        <dbReference type="Rhea" id="RHEA:19670"/>
    </physiologicalReaction>
</comment>
<comment type="cofactor">
    <cofactor evidence="3">
        <name>Mg(2+)</name>
        <dbReference type="ChEBI" id="CHEBI:18420"/>
    </cofactor>
</comment>
<comment type="activity regulation">
    <text evidence="3">Regulated by guanine nucleotide exchange factors (GEFs) which promote the exchange of bound GDP for free GTP. Regulated by GTPase activating proteins (GAPs) which increase the GTP hydrolysis activity. Inhibited by GDP dissociation inhibitors (GDIs).</text>
</comment>
<comment type="subunit">
    <text evidence="2 3 4">Interacts with NTRK1/TRKA (By similarity). Interacts with RILP (By similarity). Interacts with PSMA7 (By similarity). Interacts with RNF115 (By similarity). Interacts with FYCO1 (By similarity). Interacts with the PIK3C3/VPS34-PIK3R4 complex (By similarity). The GTP-bound form interacts with OSBPL1A (By similarity). The GTP-bound form interacts with RAC1 (By similarity). Interacts with CLN3 (By similarity). Interacts with CHM, the substrate-binding subunit of the Rab geranylgeranyltransferase complex (By similarity). Interacts with C9orf72. Does not interact with HPS4 and the BLOC-3 complex (heterodimer of HPS1 and HPS4). Interacts with CLN5 (By similarity). Interacts with PLEKHM1 (via N- and C-terminus) (By similarity). Interacts with PRPH; the interaction is direct (By similarity). Interacts with VPS13A (By similarity). The GDP-bound form interacts with RIMOC1 (By similarity). Interacts with the MON1A-CCZ1B complex and this interaction is enhanced in the presence of RIMOC1 (By similarity). Interacts with VPS39 and VPS41 (By similarity). Forms a ternary complex with LAMP2 and RUFY4; the interaction with LAMP2 is mediated by RUFY4 (via RUN and coiled coil domains) (By similarity).</text>
</comment>
<comment type="subcellular location">
    <subcellularLocation>
        <location evidence="3">Cytoplasmic vesicle</location>
        <location evidence="3">Phagosome membrane</location>
        <topology evidence="5">Peripheral membrane protein</topology>
        <orientation evidence="5">Cytoplasmic side</orientation>
    </subcellularLocation>
    <subcellularLocation>
        <location evidence="3">Late endosome membrane</location>
        <topology evidence="5">Peripheral membrane protein</topology>
        <orientation evidence="5">Cytoplasmic side</orientation>
    </subcellularLocation>
    <subcellularLocation>
        <location evidence="3">Lysosome membrane</location>
        <topology evidence="5">Peripheral membrane protein</topology>
        <orientation evidence="5">Cytoplasmic side</orientation>
    </subcellularLocation>
    <subcellularLocation>
        <location evidence="3">Melanosome membrane</location>
        <topology evidence="5">Peripheral membrane protein</topology>
        <orientation evidence="5">Cytoplasmic side</orientation>
    </subcellularLocation>
    <subcellularLocation>
        <location evidence="3">Cytoplasmic vesicle</location>
        <location evidence="3">Autophagosome membrane</location>
        <topology evidence="5">Peripheral membrane protein</topology>
        <orientation evidence="5">Cytoplasmic side</orientation>
    </subcellularLocation>
    <subcellularLocation>
        <location evidence="4">Lipid droplet</location>
    </subcellularLocation>
    <subcellularLocation>
        <location evidence="3">Endosome membrane</location>
    </subcellularLocation>
    <subcellularLocation>
        <location evidence="4">Cytoplasmic vesicle</location>
    </subcellularLocation>
    <subcellularLocation>
        <location evidence="3">Mitochondrion membrane</location>
        <topology evidence="5">Peripheral membrane protein</topology>
    </subcellularLocation>
    <text evidence="3 4">Colocalizes with OSBPL1A at the late endosome. Found in the ruffled border (a late endosomal-like compartment in the plasma membrane) of bone-resorbing osteoclasts. Recruited to phagosomes containing S.aureus or Mycobacterium. Lipid droplet localization is increased upon ADRB2 stimulation. Recruited to damaged mitochondria during mitophagy in a RIMOC1-dependent manner.</text>
</comment>
<comment type="domain">
    <text evidence="3">Switch I, switch II and the interswitch regions are characteristic of Rab GTPases and mediate the interactions with Rab downstream effectors. The switch regions undergo conformational changes upon nucleotide binding which drive interaction with specific sets of effector proteins, with most effectors only binding to GTP-bound Rab.</text>
</comment>
<comment type="PTM">
    <text evidence="3">Deubiquitination at Lys-191 and Lys-194 by USP32.</text>
</comment>
<comment type="PTM">
    <text evidence="3">Phosphorylated at Ser-72 by LRRK1; phosphorylation is dependent on protein kinase C (PKC) activation of LRRK1.</text>
</comment>
<comment type="PTM">
    <text evidence="3">Prenylated. Prenylation is required for association with cellular membranes.</text>
</comment>
<comment type="similarity">
    <text evidence="5">Belongs to the small GTPase superfamily. Rab family.</text>
</comment>
<accession>Q5R9Y4</accession>
<feature type="initiator methionine" description="Removed" evidence="3">
    <location>
        <position position="1"/>
    </location>
</feature>
<feature type="chain" id="PRO_0000260746" description="Ras-related protein Rab-7a">
    <location>
        <begin position="2"/>
        <end position="207"/>
    </location>
</feature>
<feature type="short sequence motif" description="Switch 1" evidence="3">
    <location>
        <begin position="28"/>
        <end position="41"/>
    </location>
</feature>
<feature type="short sequence motif" description="Switch 2" evidence="3">
    <location>
        <begin position="67"/>
        <end position="82"/>
    </location>
</feature>
<feature type="binding site" evidence="3">
    <location>
        <position position="17"/>
    </location>
    <ligand>
        <name>GTP</name>
        <dbReference type="ChEBI" id="CHEBI:37565"/>
    </ligand>
</feature>
<feature type="binding site" evidence="3">
    <location>
        <position position="18"/>
    </location>
    <ligand>
        <name>GTP</name>
        <dbReference type="ChEBI" id="CHEBI:37565"/>
    </ligand>
</feature>
<feature type="binding site" evidence="3">
    <location>
        <position position="19"/>
    </location>
    <ligand>
        <name>GTP</name>
        <dbReference type="ChEBI" id="CHEBI:37565"/>
    </ligand>
</feature>
<feature type="binding site" evidence="3">
    <location>
        <position position="20"/>
    </location>
    <ligand>
        <name>GTP</name>
        <dbReference type="ChEBI" id="CHEBI:37565"/>
    </ligand>
</feature>
<feature type="binding site" evidence="3">
    <location>
        <position position="21"/>
    </location>
    <ligand>
        <name>GTP</name>
        <dbReference type="ChEBI" id="CHEBI:37565"/>
    </ligand>
</feature>
<feature type="binding site" evidence="3">
    <location>
        <position position="22"/>
    </location>
    <ligand>
        <name>GTP</name>
        <dbReference type="ChEBI" id="CHEBI:37565"/>
    </ligand>
</feature>
<feature type="binding site" evidence="3">
    <location>
        <position position="22"/>
    </location>
    <ligand>
        <name>Mg(2+)</name>
        <dbReference type="ChEBI" id="CHEBI:18420"/>
    </ligand>
</feature>
<feature type="binding site" evidence="3">
    <location>
        <position position="23"/>
    </location>
    <ligand>
        <name>GTP</name>
        <dbReference type="ChEBI" id="CHEBI:37565"/>
    </ligand>
</feature>
<feature type="binding site" evidence="3">
    <location>
        <position position="34"/>
    </location>
    <ligand>
        <name>GTP</name>
        <dbReference type="ChEBI" id="CHEBI:37565"/>
    </ligand>
</feature>
<feature type="binding site" evidence="3">
    <location>
        <position position="35"/>
    </location>
    <ligand>
        <name>GTP</name>
        <dbReference type="ChEBI" id="CHEBI:37565"/>
    </ligand>
</feature>
<feature type="binding site" evidence="3">
    <location>
        <position position="37"/>
    </location>
    <ligand>
        <name>GTP</name>
        <dbReference type="ChEBI" id="CHEBI:37565"/>
    </ligand>
</feature>
<feature type="binding site" evidence="3">
    <location>
        <position position="40"/>
    </location>
    <ligand>
        <name>GTP</name>
        <dbReference type="ChEBI" id="CHEBI:37565"/>
    </ligand>
</feature>
<feature type="binding site" evidence="3">
    <location>
        <position position="40"/>
    </location>
    <ligand>
        <name>Mg(2+)</name>
        <dbReference type="ChEBI" id="CHEBI:18420"/>
    </ligand>
</feature>
<feature type="binding site" evidence="3">
    <location>
        <position position="63"/>
    </location>
    <ligand>
        <name>Mg(2+)</name>
        <dbReference type="ChEBI" id="CHEBI:18420"/>
    </ligand>
</feature>
<feature type="binding site" evidence="3">
    <location>
        <position position="66"/>
    </location>
    <ligand>
        <name>GTP</name>
        <dbReference type="ChEBI" id="CHEBI:37565"/>
    </ligand>
</feature>
<feature type="binding site" evidence="3">
    <location>
        <position position="125"/>
    </location>
    <ligand>
        <name>GTP</name>
        <dbReference type="ChEBI" id="CHEBI:37565"/>
    </ligand>
</feature>
<feature type="binding site" evidence="3">
    <location>
        <position position="126"/>
    </location>
    <ligand>
        <name>GTP</name>
        <dbReference type="ChEBI" id="CHEBI:37565"/>
    </ligand>
</feature>
<feature type="binding site" evidence="3">
    <location>
        <position position="128"/>
    </location>
    <ligand>
        <name>GTP</name>
        <dbReference type="ChEBI" id="CHEBI:37565"/>
    </ligand>
</feature>
<feature type="binding site" evidence="3">
    <location>
        <position position="156"/>
    </location>
    <ligand>
        <name>GTP</name>
        <dbReference type="ChEBI" id="CHEBI:37565"/>
    </ligand>
</feature>
<feature type="binding site" evidence="3">
    <location>
        <position position="157"/>
    </location>
    <ligand>
        <name>GTP</name>
        <dbReference type="ChEBI" id="CHEBI:37565"/>
    </ligand>
</feature>
<feature type="modified residue" description="N-acetylthreonine" evidence="3">
    <location>
        <position position="2"/>
    </location>
</feature>
<feature type="modified residue" description="Phosphoserine" evidence="3">
    <location>
        <position position="72"/>
    </location>
</feature>
<feature type="modified residue" description="Cysteine methyl ester" evidence="1">
    <location>
        <position position="207"/>
    </location>
</feature>
<feature type="lipid moiety-binding region" description="S-geranylgeranyl cysteine" evidence="1">
    <location>
        <position position="205"/>
    </location>
</feature>
<feature type="lipid moiety-binding region" description="S-geranylgeranyl cysteine" evidence="1">
    <location>
        <position position="207"/>
    </location>
</feature>
<feature type="cross-link" description="Glycyl lysine isopeptide (Lys-Gly) (interchain with G-Cter in ubiquitin)" evidence="3">
    <location>
        <position position="191"/>
    </location>
</feature>
<feature type="cross-link" description="Glycyl lysine isopeptide (Lys-Gly) (interchain with G-Cter in ubiquitin)" evidence="3">
    <location>
        <position position="194"/>
    </location>
</feature>
<keyword id="KW-0007">Acetylation</keyword>
<keyword id="KW-0072">Autophagy</keyword>
<keyword id="KW-0968">Cytoplasmic vesicle</keyword>
<keyword id="KW-0967">Endosome</keyword>
<keyword id="KW-0342">GTP-binding</keyword>
<keyword id="KW-0378">Hydrolase</keyword>
<keyword id="KW-1017">Isopeptide bond</keyword>
<keyword id="KW-0442">Lipid degradation</keyword>
<keyword id="KW-0551">Lipid droplet</keyword>
<keyword id="KW-0443">Lipid metabolism</keyword>
<keyword id="KW-0449">Lipoprotein</keyword>
<keyword id="KW-0458">Lysosome</keyword>
<keyword id="KW-0460">Magnesium</keyword>
<keyword id="KW-0472">Membrane</keyword>
<keyword id="KW-0479">Metal-binding</keyword>
<keyword id="KW-0488">Methylation</keyword>
<keyword id="KW-0496">Mitochondrion</keyword>
<keyword id="KW-0547">Nucleotide-binding</keyword>
<keyword id="KW-0597">Phosphoprotein</keyword>
<keyword id="KW-0636">Prenylation</keyword>
<keyword id="KW-0653">Protein transport</keyword>
<keyword id="KW-1185">Reference proteome</keyword>
<keyword id="KW-0813">Transport</keyword>
<keyword id="KW-0832">Ubl conjugation</keyword>
<sequence length="207" mass="23489">MTSRKKVLLKVIILGDSGVGKTSLMNQYVNKKFSNQYKATIGADFLTKEVMVDDRLVTMQIWDTAGQERFQSLGVAFYRGADCCVLVFDVTAPNTFKTLDSWRDEFLIQASPRDPENFPFVVLGNKIDLENRQVATKRAQAWCYSKNNIPYFETSAKEAINVEQAFQTIARNALKQETEVELYNEFPKPIKLDKNDRAKASAESCSC</sequence>
<proteinExistence type="evidence at transcript level"/>